<protein>
    <recommendedName>
        <fullName>Uncharacterized protein p6</fullName>
    </recommendedName>
</protein>
<keyword id="KW-0472">Membrane</keyword>
<keyword id="KW-1185">Reference proteome</keyword>
<keyword id="KW-0812">Transmembrane</keyword>
<keyword id="KW-1133">Transmembrane helix</keyword>
<organismHost>
    <name type="scientific">Chenopodium amaranticolor</name>
    <dbReference type="NCBI Taxonomy" id="66262"/>
</organismHost>
<organismHost>
    <name type="scientific">Chenopodium quinoa</name>
    <name type="common">Quinoa</name>
    <dbReference type="NCBI Taxonomy" id="63459"/>
</organismHost>
<organismHost>
    <name type="scientific">Cucumis sativus</name>
    <name type="common">Cucumber</name>
    <dbReference type="NCBI Taxonomy" id="3659"/>
</organismHost>
<organismHost>
    <name type="scientific">Nicotiana clevelandii</name>
    <name type="common">Wild tobacco</name>
    <dbReference type="NCBI Taxonomy" id="81866"/>
</organismHost>
<organismHost>
    <name type="scientific">Nicotiana tabacum</name>
    <name type="common">Common tobacco</name>
    <dbReference type="NCBI Taxonomy" id="4097"/>
</organismHost>
<organismHost>
    <name type="scientific">Phaseolus vulgaris</name>
    <name type="common">Kidney bean</name>
    <name type="synonym">French bean</name>
    <dbReference type="NCBI Taxonomy" id="3885"/>
</organismHost>
<organismHost>
    <name type="scientific">Tulipa gesneriana</name>
    <name type="common">Garden tulip</name>
    <dbReference type="NCBI Taxonomy" id="13306"/>
</organismHost>
<evidence type="ECO:0000255" key="1"/>
<evidence type="ECO:0000305" key="2"/>
<proteinExistence type="predicted"/>
<feature type="chain" id="PRO_0000222902" description="Uncharacterized protein p6">
    <location>
        <begin position="1"/>
        <end position="56"/>
    </location>
</feature>
<feature type="transmembrane region" description="Helical" evidence="1">
    <location>
        <begin position="12"/>
        <end position="32"/>
    </location>
</feature>
<feature type="region of interest" description="Hydrophobic">
    <location>
        <begin position="19"/>
        <end position="31"/>
    </location>
</feature>
<comment type="subcellular location">
    <subcellularLocation>
        <location evidence="2">Membrane</location>
        <topology evidence="2">Single-pass membrane protein</topology>
    </subcellularLocation>
</comment>
<dbReference type="EMBL" id="M33002">
    <property type="protein sequence ID" value="AAA86436.1"/>
    <property type="molecule type" value="Genomic_RNA"/>
</dbReference>
<dbReference type="PIR" id="C35523">
    <property type="entry name" value="C35523"/>
</dbReference>
<dbReference type="RefSeq" id="NP_056827.1">
    <property type="nucleotide sequence ID" value="NC_001777.1"/>
</dbReference>
<dbReference type="SMR" id="P22961"/>
<dbReference type="KEGG" id="vg:1493903"/>
<dbReference type="Proteomes" id="UP000000575">
    <property type="component" value="Genome"/>
</dbReference>
<dbReference type="GO" id="GO:0016020">
    <property type="term" value="C:membrane"/>
    <property type="evidence" value="ECO:0007669"/>
    <property type="project" value="UniProtKB-SubCell"/>
</dbReference>
<sequence length="56" mass="6240">MAACRCCDTSPGITLFPYFAILILILAILVVGTPNQQYHHSPSTYEYKTQHISIAK</sequence>
<reference key="1">
    <citation type="journal article" date="1990" name="Virology">
        <title>Genome structure of tobacco necrosis virus strain A.</title>
        <authorList>
            <person name="Meulewaeter F."/>
            <person name="Seurinck J."/>
            <person name="van Emmelo J."/>
        </authorList>
    </citation>
    <scope>NUCLEOTIDE SEQUENCE [GENOMIC RNA]</scope>
</reference>
<organism>
    <name type="scientific">Tobacco necrosis virus (strain A)</name>
    <name type="common">TNV-A</name>
    <dbReference type="NCBI Taxonomy" id="12055"/>
    <lineage>
        <taxon>Viruses</taxon>
        <taxon>Riboviria</taxon>
        <taxon>Orthornavirae</taxon>
        <taxon>Kitrinoviricota</taxon>
        <taxon>Tolucaviricetes</taxon>
        <taxon>Tolivirales</taxon>
        <taxon>Tombusviridae</taxon>
        <taxon>Procedovirinae</taxon>
        <taxon>Alphanecrovirus</taxon>
        <taxon>Alphanecrovirus nicotianae</taxon>
    </lineage>
</organism>
<name>P6_TNVA</name>
<accession>P22961</accession>
<gene>
    <name type="ORF">ORF3</name>
</gene>